<comment type="function">
    <text evidence="1">Produced by lymphocytes activated by specific antigens or mitogens. IFN-gamma, in addition to having antiviral activity, has important immunoregulatory functions. It is a potent activator of macrophages, it has antiproliferative effects on transformed cells and it can potentiate the antiviral and antitumor effects of the type I interferons (By similarity).</text>
</comment>
<comment type="subunit">
    <text evidence="1">Homodimer.</text>
</comment>
<comment type="subcellular location">
    <subcellularLocation>
        <location evidence="1">Secreted</location>
    </subcellularLocation>
</comment>
<comment type="similarity">
    <text evidence="3">Belongs to the type II (or gamma) interferon family.</text>
</comment>
<feature type="signal peptide" evidence="2">
    <location>
        <begin position="1"/>
        <end position="19"/>
    </location>
</feature>
<feature type="chain" id="PRO_0000016466" description="Interferon gamma">
    <location>
        <begin position="20"/>
        <end position="164"/>
    </location>
</feature>
<feature type="glycosylation site" description="N-linked (GlcNAc...) asparagine" evidence="2">
    <location>
        <position position="42"/>
    </location>
</feature>
<feature type="glycosylation site" description="N-linked (GlcNAc...) asparagine" evidence="2">
    <location>
        <position position="61"/>
    </location>
</feature>
<dbReference type="EMBL" id="AJ001263">
    <property type="protein sequence ID" value="CAA04637.1"/>
    <property type="molecule type" value="Genomic_DNA"/>
</dbReference>
<dbReference type="SMR" id="O73915"/>
<dbReference type="STRING" id="8996.ENSNMEP00000013494"/>
<dbReference type="GlyCosmos" id="O73915">
    <property type="glycosylation" value="2 sites, No reported glycans"/>
</dbReference>
<dbReference type="GO" id="GO:0005615">
    <property type="term" value="C:extracellular space"/>
    <property type="evidence" value="ECO:0007669"/>
    <property type="project" value="UniProtKB-KW"/>
</dbReference>
<dbReference type="GO" id="GO:0005125">
    <property type="term" value="F:cytokine activity"/>
    <property type="evidence" value="ECO:0007669"/>
    <property type="project" value="UniProtKB-KW"/>
</dbReference>
<dbReference type="GO" id="GO:0005133">
    <property type="term" value="F:type II interferon receptor binding"/>
    <property type="evidence" value="ECO:0007669"/>
    <property type="project" value="InterPro"/>
</dbReference>
<dbReference type="GO" id="GO:0002250">
    <property type="term" value="P:adaptive immune response"/>
    <property type="evidence" value="ECO:0007669"/>
    <property type="project" value="TreeGrafter"/>
</dbReference>
<dbReference type="GO" id="GO:0051607">
    <property type="term" value="P:defense response to virus"/>
    <property type="evidence" value="ECO:0007669"/>
    <property type="project" value="UniProtKB-KW"/>
</dbReference>
<dbReference type="GO" id="GO:0006959">
    <property type="term" value="P:humoral immune response"/>
    <property type="evidence" value="ECO:0007669"/>
    <property type="project" value="TreeGrafter"/>
</dbReference>
<dbReference type="FunFam" id="1.20.1250.10:FF:000007">
    <property type="entry name" value="Interferon gamma"/>
    <property type="match status" value="1"/>
</dbReference>
<dbReference type="Gene3D" id="1.20.1250.10">
    <property type="match status" value="1"/>
</dbReference>
<dbReference type="InterPro" id="IPR009079">
    <property type="entry name" value="4_helix_cytokine-like_core"/>
</dbReference>
<dbReference type="InterPro" id="IPR002069">
    <property type="entry name" value="Interferon_gamma"/>
</dbReference>
<dbReference type="PANTHER" id="PTHR11419">
    <property type="entry name" value="INTERFERON GAMMA"/>
    <property type="match status" value="1"/>
</dbReference>
<dbReference type="PANTHER" id="PTHR11419:SF0">
    <property type="entry name" value="INTERFERON GAMMA"/>
    <property type="match status" value="1"/>
</dbReference>
<dbReference type="Pfam" id="PF00714">
    <property type="entry name" value="IFN-gamma"/>
    <property type="match status" value="1"/>
</dbReference>
<dbReference type="PIRSF" id="PIRSF001936">
    <property type="entry name" value="IFN-gamma"/>
    <property type="match status" value="1"/>
</dbReference>
<dbReference type="SUPFAM" id="SSF47266">
    <property type="entry name" value="4-helical cytokines"/>
    <property type="match status" value="1"/>
</dbReference>
<sequence length="164" mass="18831">MTCQTYNLFVLSVIMIYYGHTASSLNLVQLQDDIDKLKADFNSSHSDVADGGPIFIEKLKNWTGSNEKKIILSQIVSMYLEMFENTDQSKPHIKHISEELCTLRDSLSDGVKKVKDLMDLAKLQMTDLRIQRKAANELFIVLQKLVDPPSLKRKRNQPQRRCNC</sequence>
<protein>
    <recommendedName>
        <fullName>Interferon gamma</fullName>
        <shortName>IFN-gamma</shortName>
    </recommendedName>
</protein>
<organism>
    <name type="scientific">Numida meleagris</name>
    <name type="common">Helmeted guineafowl</name>
    <name type="synonym">Phasianus meleagris</name>
    <dbReference type="NCBI Taxonomy" id="8996"/>
    <lineage>
        <taxon>Eukaryota</taxon>
        <taxon>Metazoa</taxon>
        <taxon>Chordata</taxon>
        <taxon>Craniata</taxon>
        <taxon>Vertebrata</taxon>
        <taxon>Euteleostomi</taxon>
        <taxon>Archelosauria</taxon>
        <taxon>Archosauria</taxon>
        <taxon>Dinosauria</taxon>
        <taxon>Saurischia</taxon>
        <taxon>Theropoda</taxon>
        <taxon>Coelurosauria</taxon>
        <taxon>Aves</taxon>
        <taxon>Neognathae</taxon>
        <taxon>Galloanserae</taxon>
        <taxon>Galliformes</taxon>
        <taxon>Numididae</taxon>
        <taxon>Numida</taxon>
    </lineage>
</organism>
<accession>O73915</accession>
<reference key="1">
    <citation type="submission" date="1998-05" db="EMBL/GenBank/DDBJ databases">
        <title>Avian interferon-gamma: cloning, sequencing and comparison of interferon-gamma genes from several different avian species.</title>
        <authorList>
            <person name="Kaiser P."/>
            <person name="Sonnemans D."/>
            <person name="Smith L.M."/>
        </authorList>
    </citation>
    <scope>NUCLEOTIDE SEQUENCE [GENOMIC DNA]</scope>
</reference>
<keyword id="KW-0051">Antiviral defense</keyword>
<keyword id="KW-0202">Cytokine</keyword>
<keyword id="KW-0325">Glycoprotein</keyword>
<keyword id="KW-0341">Growth regulation</keyword>
<keyword id="KW-0964">Secreted</keyword>
<keyword id="KW-0732">Signal</keyword>
<gene>
    <name type="primary">IFNG</name>
</gene>
<evidence type="ECO:0000250" key="1"/>
<evidence type="ECO:0000255" key="2"/>
<evidence type="ECO:0000305" key="3"/>
<proteinExistence type="inferred from homology"/>
<name>IFNG_NUMME</name>